<organism>
    <name type="scientific">Aspergillus aculeatus</name>
    <dbReference type="NCBI Taxonomy" id="5053"/>
    <lineage>
        <taxon>Eukaryota</taxon>
        <taxon>Fungi</taxon>
        <taxon>Dikarya</taxon>
        <taxon>Ascomycota</taxon>
        <taxon>Pezizomycotina</taxon>
        <taxon>Eurotiomycetes</taxon>
        <taxon>Eurotiomycetidae</taxon>
        <taxon>Eurotiales</taxon>
        <taxon>Aspergillaceae</taxon>
        <taxon>Aspergillus</taxon>
        <taxon>Aspergillus subgen. Circumdati</taxon>
    </lineage>
</organism>
<name>GUN_ASPAC</name>
<accession>P22669</accession>
<reference key="1">
    <citation type="journal article" date="1990" name="Nucleic Acids Res.">
        <title>Complete nucleotide sequence of a gene coding for Aspergillus aculeatus cellulase (FI-CMCase).</title>
        <authorList>
            <person name="Ooi T."/>
            <person name="Shinmyo A."/>
            <person name="Okada H."/>
            <person name="Murao S."/>
            <person name="Kawaguchi T."/>
            <person name="Arai M."/>
        </authorList>
    </citation>
    <scope>NUCLEOTIDE SEQUENCE [GENOMIC DNA]</scope>
    <source>
        <strain>F-50</strain>
    </source>
</reference>
<reference key="2">
    <citation type="journal article" date="1990" name="Curr. Genet.">
        <title>Cloning and sequence analysis of a cDNA for cellulase (FI-CMCase) from Aspergillus aculeatus.</title>
        <authorList>
            <person name="Ooi T."/>
            <person name="Shinmyo A."/>
            <person name="Okada H."/>
            <person name="Hara S."/>
            <person name="Ikenaka T."/>
            <person name="Murao S."/>
            <person name="Arai M."/>
        </authorList>
    </citation>
    <scope>NUCLEOTIDE SEQUENCE [MRNA]</scope>
    <scope>PARTIAL PROTEIN SEQUENCE</scope>
    <scope>PYROGLUTAMATE FORMATION AT GLN-17</scope>
    <source>
        <strain>F-50</strain>
    </source>
</reference>
<feature type="signal peptide" evidence="1">
    <location>
        <begin position="1"/>
        <end position="16"/>
    </location>
</feature>
<feature type="chain" id="PRO_0000008018" description="Endoglucanase-1">
    <location>
        <begin position="17"/>
        <end position="237"/>
    </location>
</feature>
<feature type="modified residue" description="Pyrrolidone carboxylic acid" evidence="2">
    <location>
        <position position="17"/>
    </location>
</feature>
<feature type="strand" evidence="4">
    <location>
        <begin position="27"/>
        <end position="30"/>
    </location>
</feature>
<feature type="strand" evidence="4">
    <location>
        <begin position="33"/>
        <end position="36"/>
    </location>
</feature>
<feature type="helix" evidence="4">
    <location>
        <begin position="42"/>
        <end position="44"/>
    </location>
</feature>
<feature type="strand" evidence="4">
    <location>
        <begin position="45"/>
        <end position="56"/>
    </location>
</feature>
<feature type="strand" evidence="4">
    <location>
        <begin position="61"/>
        <end position="71"/>
    </location>
</feature>
<feature type="strand" evidence="4">
    <location>
        <begin position="80"/>
        <end position="84"/>
    </location>
</feature>
<feature type="helix" evidence="4">
    <location>
        <begin position="91"/>
        <end position="93"/>
    </location>
</feature>
<feature type="strand" evidence="4">
    <location>
        <begin position="98"/>
        <end position="106"/>
    </location>
</feature>
<feature type="strand" evidence="4">
    <location>
        <begin position="110"/>
        <end position="123"/>
    </location>
</feature>
<feature type="strand" evidence="4">
    <location>
        <begin position="132"/>
        <end position="142"/>
    </location>
</feature>
<feature type="strand" evidence="4">
    <location>
        <begin position="148"/>
        <end position="157"/>
    </location>
</feature>
<feature type="strand" evidence="4">
    <location>
        <begin position="160"/>
        <end position="169"/>
    </location>
</feature>
<feature type="strand" evidence="4">
    <location>
        <begin position="172"/>
        <end position="178"/>
    </location>
</feature>
<feature type="strand" evidence="4">
    <location>
        <begin position="184"/>
        <end position="189"/>
    </location>
</feature>
<feature type="helix" evidence="4">
    <location>
        <begin position="191"/>
        <end position="201"/>
    </location>
</feature>
<feature type="helix" evidence="4">
    <location>
        <begin position="205"/>
        <end position="207"/>
    </location>
</feature>
<feature type="strand" evidence="4">
    <location>
        <begin position="209"/>
        <end position="234"/>
    </location>
</feature>
<comment type="catalytic activity">
    <reaction>
        <text>Endohydrolysis of (1-&gt;4)-beta-D-glucosidic linkages in cellulose, lichenin and cereal beta-D-glucans.</text>
        <dbReference type="EC" id="3.2.1.4"/>
    </reaction>
</comment>
<comment type="subcellular location">
    <subcellularLocation>
        <location>Secreted</location>
    </subcellularLocation>
</comment>
<comment type="induction">
    <text>By cellulosic materials and hemicelluloses.</text>
</comment>
<comment type="miscellaneous">
    <text>Will also hydrolyze 1,4-linkages in beta-D-glucans also containing 1,3-linkages.</text>
</comment>
<comment type="similarity">
    <text evidence="3">Belongs to the glycosyl hydrolase 12 (cellulase H) family.</text>
</comment>
<evidence type="ECO:0000255" key="1"/>
<evidence type="ECO:0000269" key="2">
    <source>
    </source>
</evidence>
<evidence type="ECO:0000305" key="3"/>
<evidence type="ECO:0007829" key="4">
    <source>
        <dbReference type="PDB" id="5GM3"/>
    </source>
</evidence>
<keyword id="KW-0002">3D-structure</keyword>
<keyword id="KW-0119">Carbohydrate metabolism</keyword>
<keyword id="KW-0136">Cellulose degradation</keyword>
<keyword id="KW-0903">Direct protein sequencing</keyword>
<keyword id="KW-0326">Glycosidase</keyword>
<keyword id="KW-0378">Hydrolase</keyword>
<keyword id="KW-0624">Polysaccharide degradation</keyword>
<keyword id="KW-0873">Pyrrolidone carboxylic acid</keyword>
<keyword id="KW-0964">Secreted</keyword>
<keyword id="KW-0732">Signal</keyword>
<sequence length="237" mass="25560">MKAFHLLAALAGAAVAQQAQLCDQYATYTGGVYTINNNLWGKDAGSGSQCTTVNSASSAGTSWSTKWNWSGGENSVKSYANSGLTFNKKLVSQISQIPTTARWSYDNTGIRADVAYDLFTAADINHVTWSGDYELMIWLARYGGVQPIGSQIATATVDGQTWELWYGANGSQKTYSFVAPTPITSFQGDVNDFFKYLTQNHGFPASSQYLITLQFGTEPFTGGPATLSVSNWSASVQ</sequence>
<dbReference type="EC" id="3.2.1.4"/>
<dbReference type="EMBL" id="D00546">
    <property type="protein sequence ID" value="BAA00435.1"/>
    <property type="molecule type" value="Genomic_DNA"/>
</dbReference>
<dbReference type="EMBL" id="X52525">
    <property type="protein sequence ID" value="CAA36757.1"/>
    <property type="molecule type" value="mRNA"/>
</dbReference>
<dbReference type="PIR" id="S12610">
    <property type="entry name" value="S12610"/>
</dbReference>
<dbReference type="PDB" id="5GM3">
    <property type="method" value="X-ray"/>
    <property type="resolution" value="1.59 A"/>
    <property type="chains" value="A/B=19-237"/>
</dbReference>
<dbReference type="PDB" id="5GM4">
    <property type="method" value="X-ray"/>
    <property type="resolution" value="1.92 A"/>
    <property type="chains" value="A/B/C/D/E/F/G=19-237"/>
</dbReference>
<dbReference type="PDB" id="5GM5">
    <property type="method" value="X-ray"/>
    <property type="resolution" value="1.73 A"/>
    <property type="chains" value="A/B/C/D/E/F/G=18-237"/>
</dbReference>
<dbReference type="PDBsum" id="5GM3"/>
<dbReference type="PDBsum" id="5GM4"/>
<dbReference type="PDBsum" id="5GM5"/>
<dbReference type="SMR" id="P22669"/>
<dbReference type="CAZy" id="GH12">
    <property type="family name" value="Glycoside Hydrolase Family 12"/>
</dbReference>
<dbReference type="VEuPathDB" id="FungiDB:ASPACDRAFT_126244"/>
<dbReference type="GO" id="GO:0005576">
    <property type="term" value="C:extracellular region"/>
    <property type="evidence" value="ECO:0007669"/>
    <property type="project" value="UniProtKB-SubCell"/>
</dbReference>
<dbReference type="GO" id="GO:0008810">
    <property type="term" value="F:cellulase activity"/>
    <property type="evidence" value="ECO:0007669"/>
    <property type="project" value="UniProtKB-EC"/>
</dbReference>
<dbReference type="GO" id="GO:0030245">
    <property type="term" value="P:cellulose catabolic process"/>
    <property type="evidence" value="ECO:0007669"/>
    <property type="project" value="UniProtKB-KW"/>
</dbReference>
<dbReference type="Gene3D" id="2.60.120.180">
    <property type="match status" value="1"/>
</dbReference>
<dbReference type="InterPro" id="IPR013320">
    <property type="entry name" value="ConA-like_dom_sf"/>
</dbReference>
<dbReference type="InterPro" id="IPR013319">
    <property type="entry name" value="GH11/12"/>
</dbReference>
<dbReference type="InterPro" id="IPR002594">
    <property type="entry name" value="GH12"/>
</dbReference>
<dbReference type="PANTHER" id="PTHR34002">
    <property type="entry name" value="BLR1656 PROTEIN"/>
    <property type="match status" value="1"/>
</dbReference>
<dbReference type="PANTHER" id="PTHR34002:SF10">
    <property type="entry name" value="PUTATIVE-RELATED"/>
    <property type="match status" value="1"/>
</dbReference>
<dbReference type="Pfam" id="PF01670">
    <property type="entry name" value="Glyco_hydro_12"/>
    <property type="match status" value="1"/>
</dbReference>
<dbReference type="SUPFAM" id="SSF49899">
    <property type="entry name" value="Concanavalin A-like lectins/glucanases"/>
    <property type="match status" value="1"/>
</dbReference>
<proteinExistence type="evidence at protein level"/>
<protein>
    <recommendedName>
        <fullName>Endoglucanase-1</fullName>
        <ecNumber>3.2.1.4</ecNumber>
    </recommendedName>
    <alternativeName>
        <fullName>Cellulase</fullName>
    </alternativeName>
    <alternativeName>
        <fullName>Endo-1,4-beta-glucanase</fullName>
    </alternativeName>
    <alternativeName>
        <fullName>Endoglucanase I</fullName>
    </alternativeName>
    <alternativeName>
        <fullName>FI-CMCase</fullName>
    </alternativeName>
</protein>